<protein>
    <recommendedName>
        <fullName evidence="1">NAD kinase</fullName>
        <ecNumber evidence="1">2.7.1.23</ecNumber>
    </recommendedName>
    <alternativeName>
        <fullName evidence="1">ATP-dependent NAD kinase</fullName>
    </alternativeName>
</protein>
<organism>
    <name type="scientific">Escherichia coli O6:H1 (strain CFT073 / ATCC 700928 / UPEC)</name>
    <dbReference type="NCBI Taxonomy" id="199310"/>
    <lineage>
        <taxon>Bacteria</taxon>
        <taxon>Pseudomonadati</taxon>
        <taxon>Pseudomonadota</taxon>
        <taxon>Gammaproteobacteria</taxon>
        <taxon>Enterobacterales</taxon>
        <taxon>Enterobacteriaceae</taxon>
        <taxon>Escherichia</taxon>
    </lineage>
</organism>
<keyword id="KW-0067">ATP-binding</keyword>
<keyword id="KW-0963">Cytoplasm</keyword>
<keyword id="KW-0418">Kinase</keyword>
<keyword id="KW-0520">NAD</keyword>
<keyword id="KW-0521">NADP</keyword>
<keyword id="KW-0547">Nucleotide-binding</keyword>
<keyword id="KW-1185">Reference proteome</keyword>
<keyword id="KW-0808">Transferase</keyword>
<gene>
    <name evidence="1" type="primary">nadK</name>
    <name type="synonym">yfjB</name>
    <name type="ordered locus">c3137</name>
</gene>
<comment type="function">
    <text evidence="1">Involved in the regulation of the intracellular balance of NAD and NADP, and is a key enzyme in the biosynthesis of NADP. Catalyzes specifically the phosphorylation on 2'-hydroxyl of the adenosine moiety of NAD to yield NADP.</text>
</comment>
<comment type="catalytic activity">
    <reaction evidence="1">
        <text>NAD(+) + ATP = ADP + NADP(+) + H(+)</text>
        <dbReference type="Rhea" id="RHEA:18629"/>
        <dbReference type="ChEBI" id="CHEBI:15378"/>
        <dbReference type="ChEBI" id="CHEBI:30616"/>
        <dbReference type="ChEBI" id="CHEBI:57540"/>
        <dbReference type="ChEBI" id="CHEBI:58349"/>
        <dbReference type="ChEBI" id="CHEBI:456216"/>
        <dbReference type="EC" id="2.7.1.23"/>
    </reaction>
</comment>
<comment type="cofactor">
    <cofactor evidence="1">
        <name>a divalent metal cation</name>
        <dbReference type="ChEBI" id="CHEBI:60240"/>
    </cofactor>
</comment>
<comment type="subcellular location">
    <subcellularLocation>
        <location evidence="1">Cytoplasm</location>
    </subcellularLocation>
</comment>
<comment type="similarity">
    <text evidence="1">Belongs to the NAD kinase family.</text>
</comment>
<name>NADK_ECOL6</name>
<accession>Q8FEY7</accession>
<feature type="chain" id="PRO_0000120617" description="NAD kinase">
    <location>
        <begin position="1"/>
        <end position="292"/>
    </location>
</feature>
<feature type="active site" description="Proton acceptor" evidence="1">
    <location>
        <position position="73"/>
    </location>
</feature>
<feature type="binding site" evidence="1">
    <location>
        <begin position="73"/>
        <end position="74"/>
    </location>
    <ligand>
        <name>NAD(+)</name>
        <dbReference type="ChEBI" id="CHEBI:57540"/>
    </ligand>
</feature>
<feature type="binding site" evidence="1">
    <location>
        <begin position="147"/>
        <end position="148"/>
    </location>
    <ligand>
        <name>NAD(+)</name>
        <dbReference type="ChEBI" id="CHEBI:57540"/>
    </ligand>
</feature>
<feature type="binding site" evidence="1">
    <location>
        <position position="158"/>
    </location>
    <ligand>
        <name>NAD(+)</name>
        <dbReference type="ChEBI" id="CHEBI:57540"/>
    </ligand>
</feature>
<feature type="binding site" evidence="1">
    <location>
        <position position="175"/>
    </location>
    <ligand>
        <name>NAD(+)</name>
        <dbReference type="ChEBI" id="CHEBI:57540"/>
    </ligand>
</feature>
<feature type="binding site" evidence="1">
    <location>
        <position position="177"/>
    </location>
    <ligand>
        <name>NAD(+)</name>
        <dbReference type="ChEBI" id="CHEBI:57540"/>
    </ligand>
</feature>
<feature type="binding site" evidence="1">
    <location>
        <begin position="188"/>
        <end position="193"/>
    </location>
    <ligand>
        <name>NAD(+)</name>
        <dbReference type="ChEBI" id="CHEBI:57540"/>
    </ligand>
</feature>
<feature type="binding site" evidence="1">
    <location>
        <position position="247"/>
    </location>
    <ligand>
        <name>NAD(+)</name>
        <dbReference type="ChEBI" id="CHEBI:57540"/>
    </ligand>
</feature>
<sequence>MNNHFKCIGIVGHPRHPTALTTHEMLYRWLCTKGYEVIVEQQIAHELQLKNVKTGTLAEIGQQADLAVVVGGDGNMLGAARTLARYDIKVIGINRGNLGFLTDLDPDNAQQQLADVLEGHYISEKRFLLEAQVCQQDCQKRISTAINEVVLHPGKVAHMIEFEVYIDEIFAFSQRSDGLIISTPTGSTAYSLSAGGPILTPSLDAITLVPMFPHTLSARPLVINSSSTIRLRFSHRRNDLEISCDSQIALPIQEGEDVLIRRCDYHLNLIHPKDYSYFNTLSTKLGWSKKLF</sequence>
<reference key="1">
    <citation type="journal article" date="2002" name="Proc. Natl. Acad. Sci. U.S.A.">
        <title>Extensive mosaic structure revealed by the complete genome sequence of uropathogenic Escherichia coli.</title>
        <authorList>
            <person name="Welch R.A."/>
            <person name="Burland V."/>
            <person name="Plunkett G. III"/>
            <person name="Redford P."/>
            <person name="Roesch P."/>
            <person name="Rasko D."/>
            <person name="Buckles E.L."/>
            <person name="Liou S.-R."/>
            <person name="Boutin A."/>
            <person name="Hackett J."/>
            <person name="Stroud D."/>
            <person name="Mayhew G.F."/>
            <person name="Rose D.J."/>
            <person name="Zhou S."/>
            <person name="Schwartz D.C."/>
            <person name="Perna N.T."/>
            <person name="Mobley H.L.T."/>
            <person name="Donnenberg M.S."/>
            <person name="Blattner F.R."/>
        </authorList>
    </citation>
    <scope>NUCLEOTIDE SEQUENCE [LARGE SCALE GENOMIC DNA]</scope>
    <source>
        <strain>CFT073 / ATCC 700928 / UPEC</strain>
    </source>
</reference>
<evidence type="ECO:0000255" key="1">
    <source>
        <dbReference type="HAMAP-Rule" id="MF_00361"/>
    </source>
</evidence>
<dbReference type="EC" id="2.7.1.23" evidence="1"/>
<dbReference type="EMBL" id="AE014075">
    <property type="protein sequence ID" value="AAN81587.1"/>
    <property type="molecule type" value="Genomic_DNA"/>
</dbReference>
<dbReference type="RefSeq" id="WP_001059176.1">
    <property type="nucleotide sequence ID" value="NZ_CP051263.1"/>
</dbReference>
<dbReference type="SMR" id="Q8FEY7"/>
<dbReference type="STRING" id="199310.c3137"/>
<dbReference type="KEGG" id="ecc:c3137"/>
<dbReference type="eggNOG" id="COG0061">
    <property type="taxonomic scope" value="Bacteria"/>
</dbReference>
<dbReference type="HOGENOM" id="CLU_008831_0_1_6"/>
<dbReference type="BioCyc" id="ECOL199310:C3137-MONOMER"/>
<dbReference type="Proteomes" id="UP000001410">
    <property type="component" value="Chromosome"/>
</dbReference>
<dbReference type="GO" id="GO:0005737">
    <property type="term" value="C:cytoplasm"/>
    <property type="evidence" value="ECO:0007669"/>
    <property type="project" value="UniProtKB-SubCell"/>
</dbReference>
<dbReference type="GO" id="GO:0005524">
    <property type="term" value="F:ATP binding"/>
    <property type="evidence" value="ECO:0007669"/>
    <property type="project" value="UniProtKB-KW"/>
</dbReference>
<dbReference type="GO" id="GO:0046872">
    <property type="term" value="F:metal ion binding"/>
    <property type="evidence" value="ECO:0007669"/>
    <property type="project" value="UniProtKB-UniRule"/>
</dbReference>
<dbReference type="GO" id="GO:0051287">
    <property type="term" value="F:NAD binding"/>
    <property type="evidence" value="ECO:0007669"/>
    <property type="project" value="UniProtKB-ARBA"/>
</dbReference>
<dbReference type="GO" id="GO:0003951">
    <property type="term" value="F:NAD+ kinase activity"/>
    <property type="evidence" value="ECO:0007669"/>
    <property type="project" value="UniProtKB-UniRule"/>
</dbReference>
<dbReference type="GO" id="GO:0019674">
    <property type="term" value="P:NAD metabolic process"/>
    <property type="evidence" value="ECO:0007669"/>
    <property type="project" value="InterPro"/>
</dbReference>
<dbReference type="GO" id="GO:0006741">
    <property type="term" value="P:NADP biosynthetic process"/>
    <property type="evidence" value="ECO:0007669"/>
    <property type="project" value="UniProtKB-UniRule"/>
</dbReference>
<dbReference type="FunFam" id="2.60.200.30:FF:000001">
    <property type="entry name" value="NAD kinase"/>
    <property type="match status" value="1"/>
</dbReference>
<dbReference type="FunFam" id="3.40.50.10330:FF:000004">
    <property type="entry name" value="NAD kinase"/>
    <property type="match status" value="1"/>
</dbReference>
<dbReference type="Gene3D" id="3.40.50.10330">
    <property type="entry name" value="Probable inorganic polyphosphate/atp-NAD kinase, domain 1"/>
    <property type="match status" value="1"/>
</dbReference>
<dbReference type="Gene3D" id="2.60.200.30">
    <property type="entry name" value="Probable inorganic polyphosphate/atp-NAD kinase, domain 2"/>
    <property type="match status" value="1"/>
</dbReference>
<dbReference type="HAMAP" id="MF_00361">
    <property type="entry name" value="NAD_kinase"/>
    <property type="match status" value="1"/>
</dbReference>
<dbReference type="InterPro" id="IPR017438">
    <property type="entry name" value="ATP-NAD_kinase_N"/>
</dbReference>
<dbReference type="InterPro" id="IPR017437">
    <property type="entry name" value="ATP-NAD_kinase_PpnK-typ_C"/>
</dbReference>
<dbReference type="InterPro" id="IPR016064">
    <property type="entry name" value="NAD/diacylglycerol_kinase_sf"/>
</dbReference>
<dbReference type="InterPro" id="IPR002504">
    <property type="entry name" value="NADK"/>
</dbReference>
<dbReference type="NCBIfam" id="NF002306">
    <property type="entry name" value="PRK01231.1"/>
    <property type="match status" value="1"/>
</dbReference>
<dbReference type="NCBIfam" id="NF002893">
    <property type="entry name" value="PRK03378.1"/>
    <property type="match status" value="1"/>
</dbReference>
<dbReference type="PANTHER" id="PTHR20275">
    <property type="entry name" value="NAD KINASE"/>
    <property type="match status" value="1"/>
</dbReference>
<dbReference type="PANTHER" id="PTHR20275:SF0">
    <property type="entry name" value="NAD KINASE"/>
    <property type="match status" value="1"/>
</dbReference>
<dbReference type="Pfam" id="PF01513">
    <property type="entry name" value="NAD_kinase"/>
    <property type="match status" value="1"/>
</dbReference>
<dbReference type="Pfam" id="PF20143">
    <property type="entry name" value="NAD_kinase_C"/>
    <property type="match status" value="1"/>
</dbReference>
<dbReference type="SUPFAM" id="SSF111331">
    <property type="entry name" value="NAD kinase/diacylglycerol kinase-like"/>
    <property type="match status" value="1"/>
</dbReference>
<proteinExistence type="inferred from homology"/>